<comment type="function">
    <text evidence="1">This protein specifically catalyzes the removal of signal peptides from prolipoproteins.</text>
</comment>
<comment type="catalytic activity">
    <reaction evidence="1">
        <text>Release of signal peptides from bacterial membrane prolipoproteins. Hydrolyzes -Xaa-Yaa-Zaa-|-(S,diacylglyceryl)Cys-, in which Xaa is hydrophobic (preferably Leu), and Yaa (Ala or Ser) and Zaa (Gly or Ala) have small, neutral side chains.</text>
        <dbReference type="EC" id="3.4.23.36"/>
    </reaction>
</comment>
<comment type="pathway">
    <text evidence="1">Protein modification; lipoprotein biosynthesis (signal peptide cleavage).</text>
</comment>
<comment type="subcellular location">
    <subcellularLocation>
        <location evidence="1">Cell membrane</location>
        <topology evidence="1">Multi-pass membrane protein</topology>
    </subcellularLocation>
</comment>
<comment type="similarity">
    <text evidence="1">Belongs to the peptidase A8 family.</text>
</comment>
<reference key="1">
    <citation type="journal article" date="2005" name="J. Bacteriol.">
        <title>Insights on evolution of virulence and resistance from the complete genome analysis of an early methicillin-resistant Staphylococcus aureus strain and a biofilm-producing methicillin-resistant Staphylococcus epidermidis strain.</title>
        <authorList>
            <person name="Gill S.R."/>
            <person name="Fouts D.E."/>
            <person name="Archer G.L."/>
            <person name="Mongodin E.F."/>
            <person name="DeBoy R.T."/>
            <person name="Ravel J."/>
            <person name="Paulsen I.T."/>
            <person name="Kolonay J.F."/>
            <person name="Brinkac L.M."/>
            <person name="Beanan M.J."/>
            <person name="Dodson R.J."/>
            <person name="Daugherty S.C."/>
            <person name="Madupu R."/>
            <person name="Angiuoli S.V."/>
            <person name="Durkin A.S."/>
            <person name="Haft D.H."/>
            <person name="Vamathevan J.J."/>
            <person name="Khouri H."/>
            <person name="Utterback T.R."/>
            <person name="Lee C."/>
            <person name="Dimitrov G."/>
            <person name="Jiang L."/>
            <person name="Qin H."/>
            <person name="Weidman J."/>
            <person name="Tran K."/>
            <person name="Kang K.H."/>
            <person name="Hance I.R."/>
            <person name="Nelson K.E."/>
            <person name="Fraser C.M."/>
        </authorList>
    </citation>
    <scope>NUCLEOTIDE SEQUENCE [LARGE SCALE GENOMIC DNA]</scope>
    <source>
        <strain>COL</strain>
    </source>
</reference>
<protein>
    <recommendedName>
        <fullName evidence="1">Lipoprotein signal peptidase</fullName>
        <ecNumber evidence="1">3.4.23.36</ecNumber>
    </recommendedName>
    <alternativeName>
        <fullName evidence="1">Prolipoprotein signal peptidase</fullName>
    </alternativeName>
    <alternativeName>
        <fullName evidence="1">Signal peptidase II</fullName>
        <shortName evidence="1">SPase II</shortName>
    </alternativeName>
</protein>
<feature type="chain" id="PRO_0000178812" description="Lipoprotein signal peptidase">
    <location>
        <begin position="1"/>
        <end position="163"/>
    </location>
</feature>
<feature type="transmembrane region" description="Helical" evidence="1">
    <location>
        <begin position="11"/>
        <end position="31"/>
    </location>
</feature>
<feature type="transmembrane region" description="Helical" evidence="1">
    <location>
        <begin position="63"/>
        <end position="83"/>
    </location>
</feature>
<feature type="transmembrane region" description="Helical" evidence="1">
    <location>
        <begin position="88"/>
        <end position="108"/>
    </location>
</feature>
<feature type="transmembrane region" description="Helical" evidence="1">
    <location>
        <begin position="131"/>
        <end position="151"/>
    </location>
</feature>
<feature type="active site" evidence="1">
    <location>
        <position position="118"/>
    </location>
</feature>
<feature type="active site" evidence="1">
    <location>
        <position position="136"/>
    </location>
</feature>
<keyword id="KW-0064">Aspartyl protease</keyword>
<keyword id="KW-1003">Cell membrane</keyword>
<keyword id="KW-0378">Hydrolase</keyword>
<keyword id="KW-0472">Membrane</keyword>
<keyword id="KW-0645">Protease</keyword>
<keyword id="KW-0812">Transmembrane</keyword>
<keyword id="KW-1133">Transmembrane helix</keyword>
<organism>
    <name type="scientific">Staphylococcus aureus (strain COL)</name>
    <dbReference type="NCBI Taxonomy" id="93062"/>
    <lineage>
        <taxon>Bacteria</taxon>
        <taxon>Bacillati</taxon>
        <taxon>Bacillota</taxon>
        <taxon>Bacilli</taxon>
        <taxon>Bacillales</taxon>
        <taxon>Staphylococcaceae</taxon>
        <taxon>Staphylococcus</taxon>
    </lineage>
</organism>
<name>LSPA_STAAC</name>
<dbReference type="EC" id="3.4.23.36" evidence="1"/>
<dbReference type="EMBL" id="CP000046">
    <property type="protein sequence ID" value="AAW38045.1"/>
    <property type="molecule type" value="Genomic_DNA"/>
</dbReference>
<dbReference type="RefSeq" id="WP_000549207.1">
    <property type="nucleotide sequence ID" value="NZ_JBGOFO010000002.1"/>
</dbReference>
<dbReference type="SMR" id="Q5HGN6"/>
<dbReference type="KEGG" id="sac:SACOL1208"/>
<dbReference type="HOGENOM" id="CLU_083252_3_0_9"/>
<dbReference type="UniPathway" id="UPA00665"/>
<dbReference type="Proteomes" id="UP000000530">
    <property type="component" value="Chromosome"/>
</dbReference>
<dbReference type="GO" id="GO:0005886">
    <property type="term" value="C:plasma membrane"/>
    <property type="evidence" value="ECO:0007669"/>
    <property type="project" value="UniProtKB-SubCell"/>
</dbReference>
<dbReference type="GO" id="GO:0004190">
    <property type="term" value="F:aspartic-type endopeptidase activity"/>
    <property type="evidence" value="ECO:0007669"/>
    <property type="project" value="UniProtKB-UniRule"/>
</dbReference>
<dbReference type="GO" id="GO:0006508">
    <property type="term" value="P:proteolysis"/>
    <property type="evidence" value="ECO:0007669"/>
    <property type="project" value="UniProtKB-KW"/>
</dbReference>
<dbReference type="HAMAP" id="MF_00161">
    <property type="entry name" value="LspA"/>
    <property type="match status" value="1"/>
</dbReference>
<dbReference type="InterPro" id="IPR001872">
    <property type="entry name" value="Peptidase_A8"/>
</dbReference>
<dbReference type="NCBIfam" id="TIGR00077">
    <property type="entry name" value="lspA"/>
    <property type="match status" value="1"/>
</dbReference>
<dbReference type="PANTHER" id="PTHR33695">
    <property type="entry name" value="LIPOPROTEIN SIGNAL PEPTIDASE"/>
    <property type="match status" value="1"/>
</dbReference>
<dbReference type="PANTHER" id="PTHR33695:SF1">
    <property type="entry name" value="LIPOPROTEIN SIGNAL PEPTIDASE"/>
    <property type="match status" value="1"/>
</dbReference>
<dbReference type="Pfam" id="PF01252">
    <property type="entry name" value="Peptidase_A8"/>
    <property type="match status" value="1"/>
</dbReference>
<dbReference type="PRINTS" id="PR00781">
    <property type="entry name" value="LIPOSIGPTASE"/>
</dbReference>
<dbReference type="PROSITE" id="PS00855">
    <property type="entry name" value="SPASE_II"/>
    <property type="match status" value="1"/>
</dbReference>
<proteinExistence type="inferred from homology"/>
<evidence type="ECO:0000255" key="1">
    <source>
        <dbReference type="HAMAP-Rule" id="MF_00161"/>
    </source>
</evidence>
<sequence>MHKKYFIGTSILIAVFVVIFDQVTKYIIATTMKIGDSFEVIPHFLNITSHRNNGAAWGILSGKMTFFFIITIIILIALVYFFIKDAQYNLFMQVAISLLFAGALGNFIDRILTGEVVDFIDTNIFGYDFPIFNIADSSLTIGVILIIIALLKDTSNKKEKEVK</sequence>
<gene>
    <name evidence="1" type="primary">lspA</name>
    <name type="ordered locus">SACOL1208</name>
</gene>
<accession>Q5HGN6</accession>